<name>TRXB2_ARATH</name>
<reference key="1">
    <citation type="journal article" date="1999" name="Nature">
        <title>Sequence and analysis of chromosome 2 of the plant Arabidopsis thaliana.</title>
        <authorList>
            <person name="Lin X."/>
            <person name="Kaul S."/>
            <person name="Rounsley S.D."/>
            <person name="Shea T.P."/>
            <person name="Benito M.-I."/>
            <person name="Town C.D."/>
            <person name="Fujii C.Y."/>
            <person name="Mason T.M."/>
            <person name="Bowman C.L."/>
            <person name="Barnstead M.E."/>
            <person name="Feldblyum T.V."/>
            <person name="Buell C.R."/>
            <person name="Ketchum K.A."/>
            <person name="Lee J.J."/>
            <person name="Ronning C.M."/>
            <person name="Koo H.L."/>
            <person name="Moffat K.S."/>
            <person name="Cronin L.A."/>
            <person name="Shen M."/>
            <person name="Pai G."/>
            <person name="Van Aken S."/>
            <person name="Umayam L."/>
            <person name="Tallon L.J."/>
            <person name="Gill J.E."/>
            <person name="Adams M.D."/>
            <person name="Carrera A.J."/>
            <person name="Creasy T.H."/>
            <person name="Goodman H.M."/>
            <person name="Somerville C.R."/>
            <person name="Copenhaver G.P."/>
            <person name="Preuss D."/>
            <person name="Nierman W.C."/>
            <person name="White O."/>
            <person name="Eisen J.A."/>
            <person name="Salzberg S.L."/>
            <person name="Fraser C.M."/>
            <person name="Venter J.C."/>
        </authorList>
    </citation>
    <scope>NUCLEOTIDE SEQUENCE [LARGE SCALE GENOMIC DNA]</scope>
    <source>
        <strain>cv. Columbia</strain>
    </source>
</reference>
<reference key="2">
    <citation type="journal article" date="2017" name="Plant J.">
        <title>Araport11: a complete reannotation of the Arabidopsis thaliana reference genome.</title>
        <authorList>
            <person name="Cheng C.Y."/>
            <person name="Krishnakumar V."/>
            <person name="Chan A.P."/>
            <person name="Thibaud-Nissen F."/>
            <person name="Schobel S."/>
            <person name="Town C.D."/>
        </authorList>
    </citation>
    <scope>GENOME REANNOTATION</scope>
    <source>
        <strain>cv. Columbia</strain>
    </source>
</reference>
<reference key="3">
    <citation type="submission" date="2006-07" db="EMBL/GenBank/DDBJ databases">
        <title>Large-scale analysis of RIKEN Arabidopsis full-length (RAFL) cDNAs.</title>
        <authorList>
            <person name="Totoki Y."/>
            <person name="Seki M."/>
            <person name="Ishida J."/>
            <person name="Nakajima M."/>
            <person name="Enju A."/>
            <person name="Kamiya A."/>
            <person name="Narusaka M."/>
            <person name="Shin-i T."/>
            <person name="Nakagawa M."/>
            <person name="Sakamoto N."/>
            <person name="Oishi K."/>
            <person name="Kohara Y."/>
            <person name="Kobayashi M."/>
            <person name="Toyoda A."/>
            <person name="Sakaki Y."/>
            <person name="Sakurai T."/>
            <person name="Iida K."/>
            <person name="Akiyama K."/>
            <person name="Satou M."/>
            <person name="Toyoda T."/>
            <person name="Konagaya A."/>
            <person name="Carninci P."/>
            <person name="Kawai J."/>
            <person name="Hayashizaki Y."/>
            <person name="Shinozaki K."/>
        </authorList>
    </citation>
    <scope>NUCLEOTIDE SEQUENCE [LARGE SCALE MRNA] OF 28-383</scope>
    <source>
        <strain>cv. Columbia</strain>
    </source>
</reference>
<reference key="4">
    <citation type="journal article" date="1994" name="J. Mol. Biol.">
        <title>Arabidopsis thaliana NAPHP thioredoxin reductase. cDNA characterization and expression of the recombinant protein in Escherichia coli.</title>
        <authorList>
            <person name="Jacquot J.-P."/>
            <person name="Rivera-Madrid R."/>
            <person name="Marinho P."/>
            <person name="Kollarova M."/>
            <person name="le Marechal P."/>
            <person name="Miginiac-Maslow M."/>
            <person name="Meyer Y."/>
        </authorList>
    </citation>
    <scope>NUCLEOTIDE SEQUENCE [MRNA] OF 82-383</scope>
    <source>
        <tissue>Silique</tissue>
    </source>
</reference>
<reference key="5">
    <citation type="journal article" date="2003" name="Science">
        <title>Empirical analysis of transcriptional activity in the Arabidopsis genome.</title>
        <authorList>
            <person name="Yamada K."/>
            <person name="Lim J."/>
            <person name="Dale J.M."/>
            <person name="Chen H."/>
            <person name="Shinn P."/>
            <person name="Palm C.J."/>
            <person name="Southwick A.M."/>
            <person name="Wu H.C."/>
            <person name="Kim C.J."/>
            <person name="Nguyen M."/>
            <person name="Pham P.K."/>
            <person name="Cheuk R.F."/>
            <person name="Karlin-Newmann G."/>
            <person name="Liu S.X."/>
            <person name="Lam B."/>
            <person name="Sakano H."/>
            <person name="Wu T."/>
            <person name="Yu G."/>
            <person name="Miranda M."/>
            <person name="Quach H.L."/>
            <person name="Tripp M."/>
            <person name="Chang C.H."/>
            <person name="Lee J.M."/>
            <person name="Toriumi M.J."/>
            <person name="Chan M.M."/>
            <person name="Tang C.C."/>
            <person name="Onodera C.S."/>
            <person name="Deng J.M."/>
            <person name="Akiyama K."/>
            <person name="Ansari Y."/>
            <person name="Arakawa T."/>
            <person name="Banh J."/>
            <person name="Banno F."/>
            <person name="Bowser L."/>
            <person name="Brooks S.Y."/>
            <person name="Carninci P."/>
            <person name="Chao Q."/>
            <person name="Choy N."/>
            <person name="Enju A."/>
            <person name="Goldsmith A.D."/>
            <person name="Gurjal M."/>
            <person name="Hansen N.F."/>
            <person name="Hayashizaki Y."/>
            <person name="Johnson-Hopson C."/>
            <person name="Hsuan V.W."/>
            <person name="Iida K."/>
            <person name="Karnes M."/>
            <person name="Khan S."/>
            <person name="Koesema E."/>
            <person name="Ishida J."/>
            <person name="Jiang P.X."/>
            <person name="Jones T."/>
            <person name="Kawai J."/>
            <person name="Kamiya A."/>
            <person name="Meyers C."/>
            <person name="Nakajima M."/>
            <person name="Narusaka M."/>
            <person name="Seki M."/>
            <person name="Sakurai T."/>
            <person name="Satou M."/>
            <person name="Tamse R."/>
            <person name="Vaysberg M."/>
            <person name="Wallender E.K."/>
            <person name="Wong C."/>
            <person name="Yamamura Y."/>
            <person name="Yuan S."/>
            <person name="Shinozaki K."/>
            <person name="Davis R.W."/>
            <person name="Theologis A."/>
            <person name="Ecker J.R."/>
        </authorList>
    </citation>
    <scope>NUCLEOTIDE SEQUENCE [LARGE SCALE MRNA] OF 91-383</scope>
    <source>
        <strain>cv. Columbia</strain>
    </source>
</reference>
<reference key="6">
    <citation type="journal article" date="2001" name="Proc. Natl. Acad. Sci. U.S.A.">
        <title>Identification and characterization of a mitochondrial thioredoxin system in plants.</title>
        <authorList>
            <person name="Laloi C."/>
            <person name="Rayapuram N."/>
            <person name="Chartier Y."/>
            <person name="Grienenberger J.M."/>
            <person name="Bonnard G."/>
            <person name="Meyer Y."/>
        </authorList>
    </citation>
    <scope>FUNCTION</scope>
    <scope>SUBCELLULAR LOCATION</scope>
</reference>
<reference key="7">
    <citation type="journal article" date="2005" name="FEBS Lett.">
        <title>AtNTRB is the major mitochondrial thioredoxin reductase in Arabidopsis thaliana.</title>
        <authorList>
            <person name="Reichheld J.P."/>
            <person name="Meyer E."/>
            <person name="Khafif M."/>
            <person name="Bonnard G."/>
            <person name="Meyer Y."/>
        </authorList>
    </citation>
    <scope>SUBCELLULAR LOCATION</scope>
</reference>
<proteinExistence type="evidence at transcript level"/>
<accession>Q39242</accession>
<accession>F4INH1</accession>
<accession>O22751</accession>
<accession>Q0WW76</accession>
<accession>Q8LPI1</accession>
<gene>
    <name type="primary">NTR2</name>
    <name type="synonym">NTRA</name>
    <name type="ordered locus">At2g17420</name>
    <name type="ORF">F5J6.18</name>
</gene>
<dbReference type="EC" id="1.8.1.9"/>
<dbReference type="EMBL" id="CP002685">
    <property type="protein sequence ID" value="AEC06623.2"/>
    <property type="molecule type" value="Genomic_DNA"/>
</dbReference>
<dbReference type="EMBL" id="AK226480">
    <property type="protein sequence ID" value="BAE98622.1"/>
    <property type="molecule type" value="mRNA"/>
</dbReference>
<dbReference type="EMBL" id="Z23108">
    <property type="protein sequence ID" value="CAA80655.1"/>
    <property type="molecule type" value="mRNA"/>
</dbReference>
<dbReference type="EMBL" id="AY099756">
    <property type="protein sequence ID" value="AAM20607.1"/>
    <property type="molecule type" value="mRNA"/>
</dbReference>
<dbReference type="PIR" id="A84552">
    <property type="entry name" value="A84552"/>
</dbReference>
<dbReference type="PIR" id="S44026">
    <property type="entry name" value="S44026"/>
</dbReference>
<dbReference type="RefSeq" id="NP_179334.5">
    <property type="nucleotide sequence ID" value="NM_127297.5"/>
</dbReference>
<dbReference type="SMR" id="Q39242"/>
<dbReference type="FunCoup" id="Q39242">
    <property type="interactions" value="916"/>
</dbReference>
<dbReference type="STRING" id="3702.Q39242"/>
<dbReference type="iPTMnet" id="Q39242"/>
<dbReference type="PaxDb" id="3702-AT2G17420.1"/>
<dbReference type="ProteomicsDB" id="232450"/>
<dbReference type="EnsemblPlants" id="AT2G17420.1">
    <property type="protein sequence ID" value="AT2G17420.1"/>
    <property type="gene ID" value="AT2G17420"/>
</dbReference>
<dbReference type="GeneID" id="816248"/>
<dbReference type="Gramene" id="AT2G17420.1">
    <property type="protein sequence ID" value="AT2G17420.1"/>
    <property type="gene ID" value="AT2G17420"/>
</dbReference>
<dbReference type="KEGG" id="ath:AT2G17420"/>
<dbReference type="Araport" id="AT2G17420"/>
<dbReference type="TAIR" id="AT2G17420">
    <property type="gene designation" value="NTRA"/>
</dbReference>
<dbReference type="eggNOG" id="KOG0404">
    <property type="taxonomic scope" value="Eukaryota"/>
</dbReference>
<dbReference type="HOGENOM" id="CLU_031864_5_1_1"/>
<dbReference type="InParanoid" id="Q39242"/>
<dbReference type="OMA" id="GPCHVLK"/>
<dbReference type="PhylomeDB" id="Q39242"/>
<dbReference type="BioCyc" id="ARA:AT2G17420-MONOMER"/>
<dbReference type="BRENDA" id="1.8.1.9">
    <property type="organism ID" value="399"/>
</dbReference>
<dbReference type="PRO" id="PR:Q39242"/>
<dbReference type="Proteomes" id="UP000006548">
    <property type="component" value="Chromosome 2"/>
</dbReference>
<dbReference type="ExpressionAtlas" id="Q39242">
    <property type="expression patterns" value="baseline and differential"/>
</dbReference>
<dbReference type="GO" id="GO:0005759">
    <property type="term" value="C:mitochondrial matrix"/>
    <property type="evidence" value="ECO:0007669"/>
    <property type="project" value="UniProtKB-SubCell"/>
</dbReference>
<dbReference type="GO" id="GO:0004791">
    <property type="term" value="F:thioredoxin-disulfide reductase (NADPH) activity"/>
    <property type="evidence" value="ECO:0000247"/>
    <property type="project" value="CACAO"/>
</dbReference>
<dbReference type="GO" id="GO:0019430">
    <property type="term" value="P:removal of superoxide radicals"/>
    <property type="evidence" value="ECO:0007669"/>
    <property type="project" value="InterPro"/>
</dbReference>
<dbReference type="FunFam" id="3.50.50.60:FF:000064">
    <property type="entry name" value="Thioredoxin reductase"/>
    <property type="match status" value="1"/>
</dbReference>
<dbReference type="Gene3D" id="3.50.50.60">
    <property type="entry name" value="FAD/NAD(P)-binding domain"/>
    <property type="match status" value="2"/>
</dbReference>
<dbReference type="InterPro" id="IPR036188">
    <property type="entry name" value="FAD/NAD-bd_sf"/>
</dbReference>
<dbReference type="InterPro" id="IPR023753">
    <property type="entry name" value="FAD/NAD-binding_dom"/>
</dbReference>
<dbReference type="InterPro" id="IPR050097">
    <property type="entry name" value="Ferredoxin-NADP_redctase_2"/>
</dbReference>
<dbReference type="InterPro" id="IPR008255">
    <property type="entry name" value="Pyr_nucl-diS_OxRdtase_2_AS"/>
</dbReference>
<dbReference type="InterPro" id="IPR005982">
    <property type="entry name" value="Thioredox_Rdtase"/>
</dbReference>
<dbReference type="NCBIfam" id="TIGR01292">
    <property type="entry name" value="TRX_reduct"/>
    <property type="match status" value="1"/>
</dbReference>
<dbReference type="PANTHER" id="PTHR48105">
    <property type="entry name" value="THIOREDOXIN REDUCTASE 1-RELATED-RELATED"/>
    <property type="match status" value="1"/>
</dbReference>
<dbReference type="Pfam" id="PF07992">
    <property type="entry name" value="Pyr_redox_2"/>
    <property type="match status" value="1"/>
</dbReference>
<dbReference type="PRINTS" id="PR00368">
    <property type="entry name" value="FADPNR"/>
</dbReference>
<dbReference type="PRINTS" id="PR00469">
    <property type="entry name" value="PNDRDTASEII"/>
</dbReference>
<dbReference type="SUPFAM" id="SSF51905">
    <property type="entry name" value="FAD/NAD(P)-binding domain"/>
    <property type="match status" value="1"/>
</dbReference>
<dbReference type="PROSITE" id="PS00573">
    <property type="entry name" value="PYRIDINE_REDOX_2"/>
    <property type="match status" value="1"/>
</dbReference>
<keyword id="KW-0963">Cytoplasm</keyword>
<keyword id="KW-1015">Disulfide bond</keyword>
<keyword id="KW-0249">Electron transport</keyword>
<keyword id="KW-0274">FAD</keyword>
<keyword id="KW-0285">Flavoprotein</keyword>
<keyword id="KW-0496">Mitochondrion</keyword>
<keyword id="KW-0521">NADP</keyword>
<keyword id="KW-0560">Oxidoreductase</keyword>
<keyword id="KW-0676">Redox-active center</keyword>
<keyword id="KW-1185">Reference proteome</keyword>
<keyword id="KW-0813">Transport</keyword>
<comment type="function">
    <text evidence="2">Possesses thioredoxin-disulfide reductase activity towards thioredoxins O1, O2 and F3.</text>
</comment>
<comment type="catalytic activity">
    <reaction>
        <text>[thioredoxin]-dithiol + NADP(+) = [thioredoxin]-disulfide + NADPH + H(+)</text>
        <dbReference type="Rhea" id="RHEA:20345"/>
        <dbReference type="Rhea" id="RHEA-COMP:10698"/>
        <dbReference type="Rhea" id="RHEA-COMP:10700"/>
        <dbReference type="ChEBI" id="CHEBI:15378"/>
        <dbReference type="ChEBI" id="CHEBI:29950"/>
        <dbReference type="ChEBI" id="CHEBI:50058"/>
        <dbReference type="ChEBI" id="CHEBI:57783"/>
        <dbReference type="ChEBI" id="CHEBI:58349"/>
        <dbReference type="EC" id="1.8.1.9"/>
    </reaction>
</comment>
<comment type="cofactor">
    <cofactor evidence="1">
        <name>FAD</name>
        <dbReference type="ChEBI" id="CHEBI:57692"/>
    </cofactor>
    <text evidence="1">Binds 1 FAD per subunit.</text>
</comment>
<comment type="subunit">
    <text>Homodimer.</text>
</comment>
<comment type="subcellular location">
    <subcellularLocation>
        <location evidence="3">Cytoplasm</location>
    </subcellularLocation>
    <subcellularLocation>
        <location evidence="2 3">Mitochondrion matrix</location>
    </subcellularLocation>
</comment>
<comment type="miscellaneous">
    <text evidence="1">The active site is a redox-active disulfide bond.</text>
</comment>
<comment type="similarity">
    <text evidence="4">Belongs to the class-II pyridine nucleotide-disulfide oxidoreductase family.</text>
</comment>
<feature type="chain" id="PRO_0000166772" description="Thioredoxin reductase 2">
    <location>
        <begin position="1"/>
        <end position="383"/>
    </location>
</feature>
<feature type="binding site" evidence="1">
    <location>
        <begin position="66"/>
        <end position="69"/>
    </location>
    <ligand>
        <name>FAD</name>
        <dbReference type="ChEBI" id="CHEBI:57692"/>
    </ligand>
</feature>
<feature type="binding site" evidence="1">
    <location>
        <begin position="87"/>
        <end position="88"/>
    </location>
    <ligand>
        <name>FAD</name>
        <dbReference type="ChEBI" id="CHEBI:57692"/>
    </ligand>
</feature>
<feature type="binding site" evidence="1">
    <location>
        <begin position="95"/>
        <end position="100"/>
    </location>
    <ligand>
        <name>FAD</name>
        <dbReference type="ChEBI" id="CHEBI:57692"/>
    </ligand>
</feature>
<feature type="binding site" evidence="1">
    <location>
        <position position="109"/>
    </location>
    <ligand>
        <name>FAD</name>
        <dbReference type="ChEBI" id="CHEBI:57692"/>
    </ligand>
</feature>
<feature type="binding site" evidence="1">
    <location>
        <position position="142"/>
    </location>
    <ligand>
        <name>FAD</name>
        <dbReference type="ChEBI" id="CHEBI:57692"/>
    </ligand>
</feature>
<feature type="binding site" evidence="1">
    <location>
        <position position="200"/>
    </location>
    <ligand>
        <name>FAD</name>
        <dbReference type="ChEBI" id="CHEBI:57692"/>
    </ligand>
</feature>
<feature type="binding site" evidence="1">
    <location>
        <position position="345"/>
    </location>
    <ligand>
        <name>FAD</name>
        <dbReference type="ChEBI" id="CHEBI:57692"/>
    </ligand>
</feature>
<feature type="binding site" evidence="1">
    <location>
        <begin position="352"/>
        <end position="354"/>
    </location>
    <ligand>
        <name>FAD</name>
        <dbReference type="ChEBI" id="CHEBI:57692"/>
    </ligand>
</feature>
<feature type="disulfide bond" description="Redox-active" evidence="1">
    <location>
        <begin position="197"/>
        <end position="200"/>
    </location>
</feature>
<feature type="sequence conflict" description="In Ref. 4; CAA80655." evidence="4" ref="4">
    <original>GW</original>
    <variation>PR</variation>
    <location>
        <begin position="89"/>
        <end position="90"/>
    </location>
</feature>
<feature type="sequence conflict" description="In Ref. 4; CAA80655." evidence="4" ref="4">
    <original>E</original>
    <variation>Q</variation>
    <location>
        <position position="308"/>
    </location>
</feature>
<sequence length="383" mass="40635">MCWISMSQSRFIIKSLFSTAGGFLLGSALSNPPSLATAFSSSSSSSSAAAAVDMETHKTKVCIVGSGPAAHTAAIYASRAELKPLLFEGWMANDIAPGGQLTTTTDVENFPGFPEGILGIDIVEKFRKQSERFGTTIFTETVNKVDFSSKPFKLFTDSRTVLADSVIISTGAVAKRLSFTGSGEGNGGFWNRGISACAVCDGAAPIFRNKPLVVIGGGDSAMEEANFLTKYGSKVYIIHRRDTFRASKIMQQRALSNPKIEVIWNSAVVEAYGDENGRVLGGLKVKNVVTGDVSDLKVSGLFFAIGHEPATKFLDGQLELDEDGYVVTKPGTTKTSVVGVFAAGDVQDKKYRQAITAAGTGCMAALDAEHYLQEIGSQEGKSD</sequence>
<evidence type="ECO:0000250" key="1"/>
<evidence type="ECO:0000269" key="2">
    <source>
    </source>
</evidence>
<evidence type="ECO:0000269" key="3">
    <source>
    </source>
</evidence>
<evidence type="ECO:0000305" key="4"/>
<organism>
    <name type="scientific">Arabidopsis thaliana</name>
    <name type="common">Mouse-ear cress</name>
    <dbReference type="NCBI Taxonomy" id="3702"/>
    <lineage>
        <taxon>Eukaryota</taxon>
        <taxon>Viridiplantae</taxon>
        <taxon>Streptophyta</taxon>
        <taxon>Embryophyta</taxon>
        <taxon>Tracheophyta</taxon>
        <taxon>Spermatophyta</taxon>
        <taxon>Magnoliopsida</taxon>
        <taxon>eudicotyledons</taxon>
        <taxon>Gunneridae</taxon>
        <taxon>Pentapetalae</taxon>
        <taxon>rosids</taxon>
        <taxon>malvids</taxon>
        <taxon>Brassicales</taxon>
        <taxon>Brassicaceae</taxon>
        <taxon>Camelineae</taxon>
        <taxon>Arabidopsis</taxon>
    </lineage>
</organism>
<protein>
    <recommendedName>
        <fullName>Thioredoxin reductase 2</fullName>
        <ecNumber>1.8.1.9</ecNumber>
    </recommendedName>
    <alternativeName>
        <fullName>NADPH-dependent thioredoxin reductase 2</fullName>
        <shortName>NTR2</shortName>
    </alternativeName>
    <alternativeName>
        <fullName>NADPH-dependent thioredoxin reductase A</fullName>
        <shortName>AtNTRA</shortName>
    </alternativeName>
</protein>